<dbReference type="EMBL" id="AE004091">
    <property type="protein sequence ID" value="AAG04950.1"/>
    <property type="molecule type" value="Genomic_DNA"/>
</dbReference>
<dbReference type="PIR" id="A83451">
    <property type="entry name" value="A83451"/>
</dbReference>
<dbReference type="RefSeq" id="NP_250252.1">
    <property type="nucleotide sequence ID" value="NC_002516.2"/>
</dbReference>
<dbReference type="RefSeq" id="WP_003087330.1">
    <property type="nucleotide sequence ID" value="NZ_QZGE01000003.1"/>
</dbReference>
<dbReference type="SMR" id="Q9I3F6"/>
<dbReference type="FunCoup" id="Q9I3F6">
    <property type="interactions" value="144"/>
</dbReference>
<dbReference type="STRING" id="208964.PA1561"/>
<dbReference type="PaxDb" id="208964-PA1561"/>
<dbReference type="GeneID" id="879271"/>
<dbReference type="KEGG" id="pae:PA1561"/>
<dbReference type="PATRIC" id="fig|208964.12.peg.1617"/>
<dbReference type="PseudoCAP" id="PA1561"/>
<dbReference type="HOGENOM" id="CLU_000445_107_26_6"/>
<dbReference type="InParanoid" id="Q9I3F6"/>
<dbReference type="OrthoDB" id="5675566at2"/>
<dbReference type="PhylomeDB" id="Q9I3F6"/>
<dbReference type="BioCyc" id="PAER208964:G1FZ6-1590-MONOMER"/>
<dbReference type="Proteomes" id="UP000002438">
    <property type="component" value="Chromosome"/>
</dbReference>
<dbReference type="GO" id="GO:0005886">
    <property type="term" value="C:plasma membrane"/>
    <property type="evidence" value="ECO:0007669"/>
    <property type="project" value="UniProtKB-SubCell"/>
</dbReference>
<dbReference type="GO" id="GO:0004888">
    <property type="term" value="F:transmembrane signaling receptor activity"/>
    <property type="evidence" value="ECO:0007669"/>
    <property type="project" value="InterPro"/>
</dbReference>
<dbReference type="GO" id="GO:0009454">
    <property type="term" value="P:aerotaxis"/>
    <property type="evidence" value="ECO:0000315"/>
    <property type="project" value="PseudoCAP"/>
</dbReference>
<dbReference type="GO" id="GO:0006935">
    <property type="term" value="P:chemotaxis"/>
    <property type="evidence" value="ECO:0000318"/>
    <property type="project" value="GO_Central"/>
</dbReference>
<dbReference type="GO" id="GO:0052131">
    <property type="term" value="P:positive aerotaxis"/>
    <property type="evidence" value="ECO:0000315"/>
    <property type="project" value="CACAO"/>
</dbReference>
<dbReference type="GO" id="GO:0007165">
    <property type="term" value="P:signal transduction"/>
    <property type="evidence" value="ECO:0007669"/>
    <property type="project" value="UniProtKB-KW"/>
</dbReference>
<dbReference type="CDD" id="cd11386">
    <property type="entry name" value="MCP_signal"/>
    <property type="match status" value="1"/>
</dbReference>
<dbReference type="CDD" id="cd00130">
    <property type="entry name" value="PAS"/>
    <property type="match status" value="1"/>
</dbReference>
<dbReference type="FunFam" id="3.30.450.20:FF:000046">
    <property type="entry name" value="Aerotaxis sensor receptor"/>
    <property type="match status" value="1"/>
</dbReference>
<dbReference type="FunFam" id="1.10.287.950:FF:000001">
    <property type="entry name" value="Methyl-accepting chemotaxis sensory transducer"/>
    <property type="match status" value="1"/>
</dbReference>
<dbReference type="Gene3D" id="1.10.287.950">
    <property type="entry name" value="Methyl-accepting chemotaxis protein"/>
    <property type="match status" value="1"/>
</dbReference>
<dbReference type="Gene3D" id="3.30.450.20">
    <property type="entry name" value="PAS domain"/>
    <property type="match status" value="1"/>
</dbReference>
<dbReference type="InterPro" id="IPR004090">
    <property type="entry name" value="Chemotax_Me-accpt_rcpt"/>
</dbReference>
<dbReference type="InterPro" id="IPR004089">
    <property type="entry name" value="MCPsignal_dom"/>
</dbReference>
<dbReference type="InterPro" id="IPR000014">
    <property type="entry name" value="PAS"/>
</dbReference>
<dbReference type="InterPro" id="IPR035965">
    <property type="entry name" value="PAS-like_dom_sf"/>
</dbReference>
<dbReference type="InterPro" id="IPR013655">
    <property type="entry name" value="PAS_fold_3"/>
</dbReference>
<dbReference type="InterPro" id="IPR000727">
    <property type="entry name" value="T_SNARE_dom"/>
</dbReference>
<dbReference type="NCBIfam" id="TIGR00229">
    <property type="entry name" value="sensory_box"/>
    <property type="match status" value="1"/>
</dbReference>
<dbReference type="PANTHER" id="PTHR32089:SF74">
    <property type="entry name" value="METHYL-ACCEPTING CHEMOTAXIS PROTEIN AER"/>
    <property type="match status" value="1"/>
</dbReference>
<dbReference type="PANTHER" id="PTHR32089">
    <property type="entry name" value="METHYL-ACCEPTING CHEMOTAXIS PROTEIN MCPB"/>
    <property type="match status" value="1"/>
</dbReference>
<dbReference type="Pfam" id="PF00015">
    <property type="entry name" value="MCPsignal"/>
    <property type="match status" value="1"/>
</dbReference>
<dbReference type="Pfam" id="PF08447">
    <property type="entry name" value="PAS_3"/>
    <property type="match status" value="1"/>
</dbReference>
<dbReference type="PRINTS" id="PR00260">
    <property type="entry name" value="CHEMTRNSDUCR"/>
</dbReference>
<dbReference type="SMART" id="SM00283">
    <property type="entry name" value="MA"/>
    <property type="match status" value="1"/>
</dbReference>
<dbReference type="SUPFAM" id="SSF58104">
    <property type="entry name" value="Methyl-accepting chemotaxis protein (MCP) signaling domain"/>
    <property type="match status" value="1"/>
</dbReference>
<dbReference type="SUPFAM" id="SSF55785">
    <property type="entry name" value="PYP-like sensor domain (PAS domain)"/>
    <property type="match status" value="1"/>
</dbReference>
<dbReference type="PROSITE" id="PS50111">
    <property type="entry name" value="CHEMOTAXIS_TRANSDUC_2"/>
    <property type="match status" value="1"/>
</dbReference>
<dbReference type="PROSITE" id="PS50112">
    <property type="entry name" value="PAS"/>
    <property type="match status" value="1"/>
</dbReference>
<keyword id="KW-0997">Cell inner membrane</keyword>
<keyword id="KW-1003">Cell membrane</keyword>
<keyword id="KW-0145">Chemotaxis</keyword>
<keyword id="KW-0472">Membrane</keyword>
<keyword id="KW-0488">Methylation</keyword>
<keyword id="KW-0675">Receptor</keyword>
<keyword id="KW-1185">Reference proteome</keyword>
<keyword id="KW-0807">Transducer</keyword>
<keyword id="KW-0812">Transmembrane</keyword>
<keyword id="KW-1133">Transmembrane helix</keyword>
<gene>
    <name evidence="6" type="primary">aer</name>
    <name evidence="6" type="synonym">tlpC</name>
    <name evidence="8" type="ordered locus">PA1561</name>
</gene>
<feature type="chain" id="PRO_0000454746" description="Methyl-accepting chemotaxis protein Aer">
    <location>
        <begin position="1"/>
        <end position="521"/>
    </location>
</feature>
<feature type="transmembrane region" description="Helical" evidence="1">
    <location>
        <begin position="147"/>
        <end position="169"/>
    </location>
</feature>
<feature type="transmembrane region" description="Helical" evidence="1">
    <location>
        <begin position="174"/>
        <end position="193"/>
    </location>
</feature>
<feature type="domain" description="PAS" evidence="2">
    <location>
        <begin position="21"/>
        <end position="76"/>
    </location>
</feature>
<feature type="domain" description="Methyl-accepting transducer" evidence="3">
    <location>
        <begin position="249"/>
        <end position="485"/>
    </location>
</feature>
<name>AER_PSEAE</name>
<comment type="function">
    <text evidence="4">Chemotactic transducer for aerotaxis.</text>
</comment>
<comment type="subcellular location">
    <subcellularLocation>
        <location evidence="7">Cell inner membrane</location>
        <topology evidence="1">Multi-pass membrane protein</topology>
    </subcellularLocation>
</comment>
<comment type="induction">
    <text evidence="5">Expression is regulated by the transcriptional regulatory protein of anaerobic gene expression, ANR. Both ANR box1 and box2 are required for the functioning of the aer promoter.</text>
</comment>
<comment type="disruption phenotype">
    <text evidence="4">Mutant shows decreased aerotaxis. Aerotaxis is abolished in the aer-mcpB double mutant.</text>
</comment>
<comment type="similarity">
    <text evidence="7">Belongs to the methyl-accepting chemotaxis (MCP) protein family.</text>
</comment>
<protein>
    <recommendedName>
        <fullName evidence="7">Methyl-accepting chemotaxis protein Aer</fullName>
    </recommendedName>
    <alternativeName>
        <fullName evidence="7">Aerotaxis receptor Aer</fullName>
    </alternativeName>
</protein>
<proteinExistence type="evidence at protein level"/>
<evidence type="ECO:0000255" key="1"/>
<evidence type="ECO:0000255" key="2">
    <source>
        <dbReference type="PROSITE-ProRule" id="PRU00140"/>
    </source>
</evidence>
<evidence type="ECO:0000255" key="3">
    <source>
        <dbReference type="PROSITE-ProRule" id="PRU00284"/>
    </source>
</evidence>
<evidence type="ECO:0000269" key="4">
    <source>
    </source>
</evidence>
<evidence type="ECO:0000269" key="5">
    <source>
    </source>
</evidence>
<evidence type="ECO:0000303" key="6">
    <source>
    </source>
</evidence>
<evidence type="ECO:0000305" key="7"/>
<evidence type="ECO:0000312" key="8">
    <source>
        <dbReference type="EMBL" id="AAG04950.1"/>
    </source>
</evidence>
<reference key="1">
    <citation type="journal article" date="2000" name="Nature">
        <title>Complete genome sequence of Pseudomonas aeruginosa PAO1, an opportunistic pathogen.</title>
        <authorList>
            <person name="Stover C.K."/>
            <person name="Pham X.-Q.T."/>
            <person name="Erwin A.L."/>
            <person name="Mizoguchi S.D."/>
            <person name="Warrener P."/>
            <person name="Hickey M.J."/>
            <person name="Brinkman F.S.L."/>
            <person name="Hufnagle W.O."/>
            <person name="Kowalik D.J."/>
            <person name="Lagrou M."/>
            <person name="Garber R.L."/>
            <person name="Goltry L."/>
            <person name="Tolentino E."/>
            <person name="Westbrock-Wadman S."/>
            <person name="Yuan Y."/>
            <person name="Brody L.L."/>
            <person name="Coulter S.N."/>
            <person name="Folger K.R."/>
            <person name="Kas A."/>
            <person name="Larbig K."/>
            <person name="Lim R.M."/>
            <person name="Smith K.A."/>
            <person name="Spencer D.H."/>
            <person name="Wong G.K.-S."/>
            <person name="Wu Z."/>
            <person name="Paulsen I.T."/>
            <person name="Reizer J."/>
            <person name="Saier M.H. Jr."/>
            <person name="Hancock R.E.W."/>
            <person name="Lory S."/>
            <person name="Olson M.V."/>
        </authorList>
    </citation>
    <scope>NUCLEOTIDE SEQUENCE [LARGE SCALE GENOMIC DNA]</scope>
    <source>
        <strain>ATCC 15692 / DSM 22644 / CIP 104116 / JCM 14847 / LMG 12228 / 1C / PRS 101 / PAO1</strain>
    </source>
</reference>
<reference key="2">
    <citation type="journal article" date="2004" name="FEMS Microbiol. Lett.">
        <title>Chemotaxis proteins and transducers for aerotaxis in Pseudomonas aeruginosa.</title>
        <authorList>
            <person name="Hong C.S."/>
            <person name="Shitashiro M."/>
            <person name="Kuroda A."/>
            <person name="Ikeda T."/>
            <person name="Takiguchi N."/>
            <person name="Ohtake H."/>
            <person name="Kato J."/>
        </authorList>
    </citation>
    <scope>FUNCTION IN AEROTAXIS</scope>
    <scope>DISRUPTION PHENOTYPE</scope>
    <source>
        <strain>ATCC 15692 / DSM 22644 / CIP 104116 / JCM 14847 / LMG 12228 / 1C / PRS 101 / PAO1</strain>
    </source>
</reference>
<reference key="3">
    <citation type="journal article" date="2004" name="J. Biosci. Bioeng.">
        <title>The aerotaxis transducer gene aer, but not aer-2, is transcriptionally regulated by the anaerobic regulator ANR in Pseudomonas aeruginosa.</title>
        <authorList>
            <person name="Hong C.S."/>
            <person name="Kuroda A."/>
            <person name="Ikeda T."/>
            <person name="Takiguchi N."/>
            <person name="Ohtake H."/>
            <person name="Kato J."/>
        </authorList>
    </citation>
    <scope>INDUCTION</scope>
    <source>
        <strain>ATCC 15692 / DSM 22644 / CIP 104116 / JCM 14847 / LMG 12228 / 1C / PRS 101 / PAO1</strain>
    </source>
</reference>
<accession>Q9I3F6</accession>
<sequence>MRNNQPITQHERVYPAEQRLITTTNLKGIITYCNEAFIDISGFSREELMSAPHNLIRHPDVPPAVFAHMWTTLKAGRPWMGIVKNRCKNGDHYWVSAYVTPIYDQGAVVGYESVRVKPTAEQIQRAEALYRRLGAGKPAIPRRDRWLPVLLDWLPFILISQIGFLIGIWLNSWWGFILAGLLAVPLGLAGLRWQKRGLKRLMRLAEQTTSDPLIAQMYTDSRGDQARLEMAILSQDARLKTCLTRLQDTAEYLTEQARQADTLAHHSSAGLEQQRAETEQVATAVNEMAATTQEVANNVQLTADATQKANELTSRGRDIAAETRNAIQRLSESVGETGAAVSRLAQDSNEIGGVVDVIKGIADQTNLLALNAAIEAARAGDQGRGFAVVADEVRSLAQRTAASTEQIHHLIAKLQNTANDAVHTMESGLQQAEAGVQRVLEADSALVGISEAVSNITEMTTQIAAAAEEQSAVAEEINRNISTIAALAEQTSDEALRTAKLSEELTTTAQSQYSLVERFNR</sequence>
<organism>
    <name type="scientific">Pseudomonas aeruginosa (strain ATCC 15692 / DSM 22644 / CIP 104116 / JCM 14847 / LMG 12228 / 1C / PRS 101 / PAO1)</name>
    <dbReference type="NCBI Taxonomy" id="208964"/>
    <lineage>
        <taxon>Bacteria</taxon>
        <taxon>Pseudomonadati</taxon>
        <taxon>Pseudomonadota</taxon>
        <taxon>Gammaproteobacteria</taxon>
        <taxon>Pseudomonadales</taxon>
        <taxon>Pseudomonadaceae</taxon>
        <taxon>Pseudomonas</taxon>
    </lineage>
</organism>